<protein>
    <recommendedName>
        <fullName evidence="1">DNA-directed RNA polymerase subunit alpha</fullName>
        <shortName evidence="1">RNAP subunit alpha</shortName>
        <ecNumber evidence="1">2.7.7.6</ecNumber>
    </recommendedName>
    <alternativeName>
        <fullName evidence="1">RNA polymerase subunit alpha</fullName>
    </alternativeName>
    <alternativeName>
        <fullName evidence="1">Transcriptase subunit alpha</fullName>
    </alternativeName>
</protein>
<dbReference type="EC" id="2.7.7.6" evidence="1"/>
<dbReference type="EMBL" id="AL445565">
    <property type="protein sequence ID" value="CAC13734.1"/>
    <property type="molecule type" value="Genomic_DNA"/>
</dbReference>
<dbReference type="PIR" id="A99582">
    <property type="entry name" value="A99582"/>
</dbReference>
<dbReference type="RefSeq" id="WP_010925362.1">
    <property type="nucleotide sequence ID" value="NC_002771.1"/>
</dbReference>
<dbReference type="SMR" id="Q98Q08"/>
<dbReference type="STRING" id="272635.gene:17577168"/>
<dbReference type="KEGG" id="mpu:MYPU_5610"/>
<dbReference type="eggNOG" id="COG0202">
    <property type="taxonomic scope" value="Bacteria"/>
</dbReference>
<dbReference type="HOGENOM" id="CLU_053084_0_1_14"/>
<dbReference type="BioCyc" id="MPUL272635:G1GT6-574-MONOMER"/>
<dbReference type="Proteomes" id="UP000000528">
    <property type="component" value="Chromosome"/>
</dbReference>
<dbReference type="GO" id="GO:0005737">
    <property type="term" value="C:cytoplasm"/>
    <property type="evidence" value="ECO:0007669"/>
    <property type="project" value="UniProtKB-ARBA"/>
</dbReference>
<dbReference type="GO" id="GO:0000428">
    <property type="term" value="C:DNA-directed RNA polymerase complex"/>
    <property type="evidence" value="ECO:0007669"/>
    <property type="project" value="UniProtKB-KW"/>
</dbReference>
<dbReference type="GO" id="GO:0003677">
    <property type="term" value="F:DNA binding"/>
    <property type="evidence" value="ECO:0007669"/>
    <property type="project" value="UniProtKB-UniRule"/>
</dbReference>
<dbReference type="GO" id="GO:0003899">
    <property type="term" value="F:DNA-directed RNA polymerase activity"/>
    <property type="evidence" value="ECO:0007669"/>
    <property type="project" value="UniProtKB-UniRule"/>
</dbReference>
<dbReference type="GO" id="GO:0046983">
    <property type="term" value="F:protein dimerization activity"/>
    <property type="evidence" value="ECO:0007669"/>
    <property type="project" value="InterPro"/>
</dbReference>
<dbReference type="GO" id="GO:0006351">
    <property type="term" value="P:DNA-templated transcription"/>
    <property type="evidence" value="ECO:0007669"/>
    <property type="project" value="UniProtKB-UniRule"/>
</dbReference>
<dbReference type="CDD" id="cd06928">
    <property type="entry name" value="RNAP_alpha_NTD"/>
    <property type="match status" value="1"/>
</dbReference>
<dbReference type="Gene3D" id="1.10.150.20">
    <property type="entry name" value="5' to 3' exonuclease, C-terminal subdomain"/>
    <property type="match status" value="1"/>
</dbReference>
<dbReference type="Gene3D" id="2.170.120.12">
    <property type="entry name" value="DNA-directed RNA polymerase, insert domain"/>
    <property type="match status" value="1"/>
</dbReference>
<dbReference type="Gene3D" id="3.30.1360.10">
    <property type="entry name" value="RNA polymerase, RBP11-like subunit"/>
    <property type="match status" value="1"/>
</dbReference>
<dbReference type="HAMAP" id="MF_00059">
    <property type="entry name" value="RNApol_bact_RpoA"/>
    <property type="match status" value="1"/>
</dbReference>
<dbReference type="InterPro" id="IPR011262">
    <property type="entry name" value="DNA-dir_RNA_pol_insert"/>
</dbReference>
<dbReference type="InterPro" id="IPR011263">
    <property type="entry name" value="DNA-dir_RNA_pol_RpoA/D/Rpb3"/>
</dbReference>
<dbReference type="InterPro" id="IPR011773">
    <property type="entry name" value="DNA-dir_RpoA"/>
</dbReference>
<dbReference type="InterPro" id="IPR036603">
    <property type="entry name" value="RBP11-like"/>
</dbReference>
<dbReference type="InterPro" id="IPR011260">
    <property type="entry name" value="RNAP_asu_C"/>
</dbReference>
<dbReference type="InterPro" id="IPR036643">
    <property type="entry name" value="RNApol_insert_sf"/>
</dbReference>
<dbReference type="NCBIfam" id="NF003519">
    <property type="entry name" value="PRK05182.2-5"/>
    <property type="match status" value="1"/>
</dbReference>
<dbReference type="NCBIfam" id="TIGR02027">
    <property type="entry name" value="rpoA"/>
    <property type="match status" value="1"/>
</dbReference>
<dbReference type="Pfam" id="PF01000">
    <property type="entry name" value="RNA_pol_A_bac"/>
    <property type="match status" value="1"/>
</dbReference>
<dbReference type="Pfam" id="PF03118">
    <property type="entry name" value="RNA_pol_A_CTD"/>
    <property type="match status" value="1"/>
</dbReference>
<dbReference type="Pfam" id="PF01193">
    <property type="entry name" value="RNA_pol_L"/>
    <property type="match status" value="1"/>
</dbReference>
<dbReference type="SMART" id="SM00662">
    <property type="entry name" value="RPOLD"/>
    <property type="match status" value="1"/>
</dbReference>
<dbReference type="SUPFAM" id="SSF47789">
    <property type="entry name" value="C-terminal domain of RNA polymerase alpha subunit"/>
    <property type="match status" value="1"/>
</dbReference>
<dbReference type="SUPFAM" id="SSF56553">
    <property type="entry name" value="Insert subdomain of RNA polymerase alpha subunit"/>
    <property type="match status" value="1"/>
</dbReference>
<dbReference type="SUPFAM" id="SSF55257">
    <property type="entry name" value="RBP11-like subunits of RNA polymerase"/>
    <property type="match status" value="1"/>
</dbReference>
<feature type="chain" id="PRO_0000175343" description="DNA-directed RNA polymerase subunit alpha">
    <location>
        <begin position="1"/>
        <end position="333"/>
    </location>
</feature>
<feature type="region of interest" description="Alpha N-terminal domain (alpha-NTD)" evidence="1">
    <location>
        <begin position="1"/>
        <end position="246"/>
    </location>
</feature>
<feature type="region of interest" description="Alpha C-terminal domain (alpha-CTD)" evidence="1">
    <location>
        <begin position="262"/>
        <end position="333"/>
    </location>
</feature>
<proteinExistence type="inferred from homology"/>
<comment type="function">
    <text evidence="1">DNA-dependent RNA polymerase catalyzes the transcription of DNA into RNA using the four ribonucleoside triphosphates as substrates.</text>
</comment>
<comment type="catalytic activity">
    <reaction evidence="1">
        <text>RNA(n) + a ribonucleoside 5'-triphosphate = RNA(n+1) + diphosphate</text>
        <dbReference type="Rhea" id="RHEA:21248"/>
        <dbReference type="Rhea" id="RHEA-COMP:14527"/>
        <dbReference type="Rhea" id="RHEA-COMP:17342"/>
        <dbReference type="ChEBI" id="CHEBI:33019"/>
        <dbReference type="ChEBI" id="CHEBI:61557"/>
        <dbReference type="ChEBI" id="CHEBI:140395"/>
        <dbReference type="EC" id="2.7.7.6"/>
    </reaction>
</comment>
<comment type="subunit">
    <text evidence="1">Homodimer. The RNAP catalytic core consists of 2 alpha, 1 beta, 1 beta' and 1 omega subunit. When a sigma factor is associated with the core the holoenzyme is formed, which can initiate transcription.</text>
</comment>
<comment type="domain">
    <text evidence="1">The N-terminal domain is essential for RNAP assembly and basal transcription, whereas the C-terminal domain is involved in interaction with transcriptional regulators and with upstream promoter elements.</text>
</comment>
<comment type="similarity">
    <text evidence="1">Belongs to the RNA polymerase alpha chain family.</text>
</comment>
<reference key="1">
    <citation type="journal article" date="2001" name="Nucleic Acids Res.">
        <title>The complete genome sequence of the murine respiratory pathogen Mycoplasma pulmonis.</title>
        <authorList>
            <person name="Chambaud I."/>
            <person name="Heilig R."/>
            <person name="Ferris S."/>
            <person name="Barbe V."/>
            <person name="Samson D."/>
            <person name="Galisson F."/>
            <person name="Moszer I."/>
            <person name="Dybvig K."/>
            <person name="Wroblewski H."/>
            <person name="Viari A."/>
            <person name="Rocha E.P.C."/>
            <person name="Blanchard A."/>
        </authorList>
    </citation>
    <scope>NUCLEOTIDE SEQUENCE [LARGE SCALE GENOMIC DNA]</scope>
    <source>
        <strain>UAB CTIP</strain>
    </source>
</reference>
<evidence type="ECO:0000255" key="1">
    <source>
        <dbReference type="HAMAP-Rule" id="MF_00059"/>
    </source>
</evidence>
<sequence>MKKMVQIKYKEVKTKRVNDYETTFKIEPLERGFGSTIGTALRRTLLSSITSVVPFAIKIKDVDQEFDTISDIVEDVQMIMLNVKNIHLVYDENIFEDNKIYRGVIETKNEKITSSDLKFPENPEIEIVNKDLEIATNNGQKPFVMEVYFHVGRGYISFEDNKKLIEEKVALLNSTIKRGKFLAIDSDFSPVEKVKVKVQEINSSSLNIEEELEIEIKTKGTIDTKNILSQAAQILIAHLQVIGDVKNLDAVDVFEQKKQEKVEPSIHSVDITSLDLSVRSINALKRQGYTKLADILTLTEDDLVAVKNLGKKSVEEIIQKLKEYNVTLNRGEK</sequence>
<keyword id="KW-0240">DNA-directed RNA polymerase</keyword>
<keyword id="KW-0548">Nucleotidyltransferase</keyword>
<keyword id="KW-1185">Reference proteome</keyword>
<keyword id="KW-0804">Transcription</keyword>
<keyword id="KW-0808">Transferase</keyword>
<gene>
    <name evidence="1" type="primary">rpoA</name>
    <name type="ordered locus">MYPU_5610</name>
</gene>
<name>RPOA_MYCPU</name>
<accession>Q98Q08</accession>
<organism>
    <name type="scientific">Mycoplasmopsis pulmonis (strain UAB CTIP)</name>
    <name type="common">Mycoplasma pulmonis</name>
    <dbReference type="NCBI Taxonomy" id="272635"/>
    <lineage>
        <taxon>Bacteria</taxon>
        <taxon>Bacillati</taxon>
        <taxon>Mycoplasmatota</taxon>
        <taxon>Mycoplasmoidales</taxon>
        <taxon>Metamycoplasmataceae</taxon>
        <taxon>Mycoplasmopsis</taxon>
    </lineage>
</organism>